<organism>
    <name type="scientific">Mycoplasmopsis agalactiae (strain NCTC 10123 / CIP 59.7 / PG2)</name>
    <name type="common">Mycoplasma agalactiae</name>
    <dbReference type="NCBI Taxonomy" id="347257"/>
    <lineage>
        <taxon>Bacteria</taxon>
        <taxon>Bacillati</taxon>
        <taxon>Mycoplasmatota</taxon>
        <taxon>Mycoplasmoidales</taxon>
        <taxon>Metamycoplasmataceae</taxon>
        <taxon>Mycoplasmopsis</taxon>
    </lineage>
</organism>
<name>RS18_MYCAP</name>
<evidence type="ECO:0000255" key="1">
    <source>
        <dbReference type="HAMAP-Rule" id="MF_00270"/>
    </source>
</evidence>
<evidence type="ECO:0000305" key="2"/>
<dbReference type="EMBL" id="CU179680">
    <property type="protein sequence ID" value="CAL58976.1"/>
    <property type="molecule type" value="Genomic_DNA"/>
</dbReference>
<dbReference type="RefSeq" id="WP_011949454.1">
    <property type="nucleotide sequence ID" value="NC_009497.1"/>
</dbReference>
<dbReference type="SMR" id="A5IY67"/>
<dbReference type="STRING" id="347257.MAG2780"/>
<dbReference type="GeneID" id="93358041"/>
<dbReference type="KEGG" id="maa:MAG2780"/>
<dbReference type="HOGENOM" id="CLU_148710_2_0_14"/>
<dbReference type="Proteomes" id="UP000007065">
    <property type="component" value="Chromosome"/>
</dbReference>
<dbReference type="GO" id="GO:0022627">
    <property type="term" value="C:cytosolic small ribosomal subunit"/>
    <property type="evidence" value="ECO:0007669"/>
    <property type="project" value="TreeGrafter"/>
</dbReference>
<dbReference type="GO" id="GO:0070181">
    <property type="term" value="F:small ribosomal subunit rRNA binding"/>
    <property type="evidence" value="ECO:0007669"/>
    <property type="project" value="TreeGrafter"/>
</dbReference>
<dbReference type="GO" id="GO:0003735">
    <property type="term" value="F:structural constituent of ribosome"/>
    <property type="evidence" value="ECO:0007669"/>
    <property type="project" value="InterPro"/>
</dbReference>
<dbReference type="GO" id="GO:0006412">
    <property type="term" value="P:translation"/>
    <property type="evidence" value="ECO:0007669"/>
    <property type="project" value="UniProtKB-UniRule"/>
</dbReference>
<dbReference type="Gene3D" id="4.10.640.10">
    <property type="entry name" value="Ribosomal protein S18"/>
    <property type="match status" value="1"/>
</dbReference>
<dbReference type="HAMAP" id="MF_00270">
    <property type="entry name" value="Ribosomal_bS18"/>
    <property type="match status" value="1"/>
</dbReference>
<dbReference type="InterPro" id="IPR001648">
    <property type="entry name" value="Ribosomal_bS18"/>
</dbReference>
<dbReference type="InterPro" id="IPR036870">
    <property type="entry name" value="Ribosomal_bS18_sf"/>
</dbReference>
<dbReference type="NCBIfam" id="TIGR00165">
    <property type="entry name" value="S18"/>
    <property type="match status" value="1"/>
</dbReference>
<dbReference type="PANTHER" id="PTHR13479">
    <property type="entry name" value="30S RIBOSOMAL PROTEIN S18"/>
    <property type="match status" value="1"/>
</dbReference>
<dbReference type="PANTHER" id="PTHR13479:SF40">
    <property type="entry name" value="SMALL RIBOSOMAL SUBUNIT PROTEIN BS18M"/>
    <property type="match status" value="1"/>
</dbReference>
<dbReference type="Pfam" id="PF01084">
    <property type="entry name" value="Ribosomal_S18"/>
    <property type="match status" value="1"/>
</dbReference>
<dbReference type="PRINTS" id="PR00974">
    <property type="entry name" value="RIBOSOMALS18"/>
</dbReference>
<dbReference type="SUPFAM" id="SSF46911">
    <property type="entry name" value="Ribosomal protein S18"/>
    <property type="match status" value="1"/>
</dbReference>
<keyword id="KW-1185">Reference proteome</keyword>
<keyword id="KW-0687">Ribonucleoprotein</keyword>
<keyword id="KW-0689">Ribosomal protein</keyword>
<keyword id="KW-0694">RNA-binding</keyword>
<keyword id="KW-0699">rRNA-binding</keyword>
<protein>
    <recommendedName>
        <fullName evidence="1">Small ribosomal subunit protein bS18</fullName>
    </recommendedName>
    <alternativeName>
        <fullName evidence="2">30S ribosomal protein S18</fullName>
    </alternativeName>
</protein>
<sequence>MANFKKVKKGRNLRRKCELCETNIEYVDYKNVEFITKFISGIGQIKPHVSTGTCARHQRKVANAIKRARFMALIPYTKDKIRVLAPAASANTAQAPAEKAKKEAVAA</sequence>
<proteinExistence type="inferred from homology"/>
<accession>A5IY67</accession>
<gene>
    <name evidence="1" type="primary">rpsR</name>
    <name type="ordered locus">MAG2780</name>
</gene>
<feature type="chain" id="PRO_0000345512" description="Small ribosomal subunit protein bS18">
    <location>
        <begin position="1"/>
        <end position="107"/>
    </location>
</feature>
<comment type="function">
    <text evidence="1">Binds as a heterodimer with protein bS6 to the central domain of the 16S rRNA, where it helps stabilize the platform of the 30S subunit.</text>
</comment>
<comment type="subunit">
    <text evidence="1">Part of the 30S ribosomal subunit. Forms a tight heterodimer with protein bS6.</text>
</comment>
<comment type="similarity">
    <text evidence="1">Belongs to the bacterial ribosomal protein bS18 family.</text>
</comment>
<reference key="1">
    <citation type="journal article" date="2007" name="PLoS Genet.">
        <title>Being pathogenic, plastic, and sexual while living with a nearly minimal bacterial genome.</title>
        <authorList>
            <person name="Sirand-Pugnet P."/>
            <person name="Lartigue C."/>
            <person name="Marenda M."/>
            <person name="Jacob D."/>
            <person name="Barre A."/>
            <person name="Barbe V."/>
            <person name="Schenowitz C."/>
            <person name="Mangenot S."/>
            <person name="Couloux A."/>
            <person name="Segurens B."/>
            <person name="de Daruvar A."/>
            <person name="Blanchard A."/>
            <person name="Citti C."/>
        </authorList>
    </citation>
    <scope>NUCLEOTIDE SEQUENCE [LARGE SCALE GENOMIC DNA]</scope>
    <source>
        <strain>NCTC 10123 / CIP 59.7 / PG2</strain>
    </source>
</reference>